<name>RS21_GRABC</name>
<evidence type="ECO:0000255" key="1">
    <source>
        <dbReference type="HAMAP-Rule" id="MF_00358"/>
    </source>
</evidence>
<evidence type="ECO:0000305" key="2"/>
<comment type="similarity">
    <text evidence="1">Belongs to the bacterial ribosomal protein bS21 family.</text>
</comment>
<comment type="sequence caution" evidence="2">
    <conflict type="erroneous initiation">
        <sequence resource="EMBL-CDS" id="ABI61379"/>
    </conflict>
</comment>
<proteinExistence type="inferred from homology"/>
<accession>Q0BUX3</accession>
<reference key="1">
    <citation type="journal article" date="2007" name="J. Bacteriol.">
        <title>Genome sequence analysis of the emerging human pathogenic acetic acid bacterium Granulibacter bethesdensis.</title>
        <authorList>
            <person name="Greenberg D.E."/>
            <person name="Porcella S.F."/>
            <person name="Zelazny A.M."/>
            <person name="Virtaneva K."/>
            <person name="Sturdevant D.E."/>
            <person name="Kupko J.J. III"/>
            <person name="Barbian K.D."/>
            <person name="Babar A."/>
            <person name="Dorward D.W."/>
            <person name="Holland S.M."/>
        </authorList>
    </citation>
    <scope>NUCLEOTIDE SEQUENCE [LARGE SCALE GENOMIC DNA]</scope>
    <source>
        <strain>ATCC BAA-1260 / CGDNIH1</strain>
    </source>
</reference>
<protein>
    <recommendedName>
        <fullName evidence="1">Small ribosomal subunit protein bS21</fullName>
    </recommendedName>
    <alternativeName>
        <fullName evidence="2">30S ribosomal protein S21</fullName>
    </alternativeName>
</protein>
<feature type="chain" id="PRO_0000266686" description="Small ribosomal subunit protein bS21">
    <location>
        <begin position="1"/>
        <end position="67"/>
    </location>
</feature>
<dbReference type="EMBL" id="CP000394">
    <property type="protein sequence ID" value="ABI61379.1"/>
    <property type="status" value="ALT_INIT"/>
    <property type="molecule type" value="Genomic_DNA"/>
</dbReference>
<dbReference type="RefSeq" id="WP_043455061.1">
    <property type="nucleotide sequence ID" value="NC_008343.2"/>
</dbReference>
<dbReference type="SMR" id="Q0BUX3"/>
<dbReference type="STRING" id="391165.GbCGDNIH1_0481"/>
<dbReference type="GeneID" id="69744738"/>
<dbReference type="KEGG" id="gbe:GbCGDNIH1_0481"/>
<dbReference type="eggNOG" id="COG0828">
    <property type="taxonomic scope" value="Bacteria"/>
</dbReference>
<dbReference type="HOGENOM" id="CLU_159258_0_1_5"/>
<dbReference type="OrthoDB" id="9811907at2"/>
<dbReference type="Proteomes" id="UP000001963">
    <property type="component" value="Chromosome"/>
</dbReference>
<dbReference type="GO" id="GO:1990904">
    <property type="term" value="C:ribonucleoprotein complex"/>
    <property type="evidence" value="ECO:0007669"/>
    <property type="project" value="UniProtKB-KW"/>
</dbReference>
<dbReference type="GO" id="GO:0005840">
    <property type="term" value="C:ribosome"/>
    <property type="evidence" value="ECO:0007669"/>
    <property type="project" value="UniProtKB-KW"/>
</dbReference>
<dbReference type="GO" id="GO:0003735">
    <property type="term" value="F:structural constituent of ribosome"/>
    <property type="evidence" value="ECO:0007669"/>
    <property type="project" value="InterPro"/>
</dbReference>
<dbReference type="GO" id="GO:0006412">
    <property type="term" value="P:translation"/>
    <property type="evidence" value="ECO:0007669"/>
    <property type="project" value="UniProtKB-UniRule"/>
</dbReference>
<dbReference type="Gene3D" id="1.20.5.1150">
    <property type="entry name" value="Ribosomal protein S8"/>
    <property type="match status" value="1"/>
</dbReference>
<dbReference type="HAMAP" id="MF_00358">
    <property type="entry name" value="Ribosomal_bS21"/>
    <property type="match status" value="1"/>
</dbReference>
<dbReference type="InterPro" id="IPR001911">
    <property type="entry name" value="Ribosomal_bS21"/>
</dbReference>
<dbReference type="InterPro" id="IPR018278">
    <property type="entry name" value="Ribosomal_bS21_CS"/>
</dbReference>
<dbReference type="InterPro" id="IPR038380">
    <property type="entry name" value="Ribosomal_bS21_sf"/>
</dbReference>
<dbReference type="NCBIfam" id="TIGR00030">
    <property type="entry name" value="S21p"/>
    <property type="match status" value="1"/>
</dbReference>
<dbReference type="PANTHER" id="PTHR21109">
    <property type="entry name" value="MITOCHONDRIAL 28S RIBOSOMAL PROTEIN S21"/>
    <property type="match status" value="1"/>
</dbReference>
<dbReference type="PANTHER" id="PTHR21109:SF0">
    <property type="entry name" value="SMALL RIBOSOMAL SUBUNIT PROTEIN BS21M"/>
    <property type="match status" value="1"/>
</dbReference>
<dbReference type="Pfam" id="PF01165">
    <property type="entry name" value="Ribosomal_S21"/>
    <property type="match status" value="1"/>
</dbReference>
<dbReference type="PROSITE" id="PS01181">
    <property type="entry name" value="RIBOSOMAL_S21"/>
    <property type="match status" value="1"/>
</dbReference>
<gene>
    <name evidence="1" type="primary">rpsU</name>
    <name type="ordered locus">GbCGDNIH1_0481</name>
</gene>
<keyword id="KW-1185">Reference proteome</keyword>
<keyword id="KW-0687">Ribonucleoprotein</keyword>
<keyword id="KW-0689">Ribosomal protein</keyword>
<sequence>MQVLVRDNNVDQALKALKKKMQREGIFREMKLRRHFEKPSERKAREAAEAVRRARKLERKRLEREGF</sequence>
<organism>
    <name type="scientific">Granulibacter bethesdensis (strain ATCC BAA-1260 / CGDNIH1)</name>
    <dbReference type="NCBI Taxonomy" id="391165"/>
    <lineage>
        <taxon>Bacteria</taxon>
        <taxon>Pseudomonadati</taxon>
        <taxon>Pseudomonadota</taxon>
        <taxon>Alphaproteobacteria</taxon>
        <taxon>Acetobacterales</taxon>
        <taxon>Acetobacteraceae</taxon>
        <taxon>Granulibacter</taxon>
    </lineage>
</organism>